<organism>
    <name type="scientific">Macaca fascicularis</name>
    <name type="common">Crab-eating macaque</name>
    <name type="synonym">Cynomolgus monkey</name>
    <dbReference type="NCBI Taxonomy" id="9541"/>
    <lineage>
        <taxon>Eukaryota</taxon>
        <taxon>Metazoa</taxon>
        <taxon>Chordata</taxon>
        <taxon>Craniata</taxon>
        <taxon>Vertebrata</taxon>
        <taxon>Euteleostomi</taxon>
        <taxon>Mammalia</taxon>
        <taxon>Eutheria</taxon>
        <taxon>Euarchontoglires</taxon>
        <taxon>Primates</taxon>
        <taxon>Haplorrhini</taxon>
        <taxon>Catarrhini</taxon>
        <taxon>Cercopithecidae</taxon>
        <taxon>Cercopithecinae</taxon>
        <taxon>Macaca</taxon>
    </lineage>
</organism>
<dbReference type="EC" id="5.3.2.1" evidence="1"/>
<dbReference type="EC" id="5.3.3.12" evidence="1"/>
<dbReference type="EMBL" id="AB169695">
    <property type="protein sequence ID" value="BAE01776.1"/>
    <property type="molecule type" value="mRNA"/>
</dbReference>
<dbReference type="RefSeq" id="NP_001270626.1">
    <property type="nucleotide sequence ID" value="NM_001283697.1"/>
</dbReference>
<dbReference type="RefSeq" id="XP_045220343.1">
    <property type="nucleotide sequence ID" value="XM_045364408.2"/>
</dbReference>
<dbReference type="SMR" id="Q4R549"/>
<dbReference type="STRING" id="9541.ENSMFAP00000033043"/>
<dbReference type="Ensembl" id="ENSMFAT00000007268.2">
    <property type="protein sequence ID" value="ENSMFAP00000033043.1"/>
    <property type="gene ID" value="ENSMFAG00000003050.2"/>
</dbReference>
<dbReference type="GeneID" id="101867092"/>
<dbReference type="VEuPathDB" id="HostDB:ENSMFAG00000003050"/>
<dbReference type="eggNOG" id="KOG1759">
    <property type="taxonomic scope" value="Eukaryota"/>
</dbReference>
<dbReference type="GeneTree" id="ENSGT00940000155608"/>
<dbReference type="OMA" id="YINFFDM"/>
<dbReference type="Proteomes" id="UP000233100">
    <property type="component" value="Chromosome 10"/>
</dbReference>
<dbReference type="Bgee" id="ENSMFAG00000003050">
    <property type="expression patterns" value="Expressed in pituitary gland and 13 other cell types or tissues"/>
</dbReference>
<dbReference type="GO" id="GO:0009986">
    <property type="term" value="C:cell surface"/>
    <property type="evidence" value="ECO:0007669"/>
    <property type="project" value="Ensembl"/>
</dbReference>
<dbReference type="GO" id="GO:0005829">
    <property type="term" value="C:cytosol"/>
    <property type="evidence" value="ECO:0007669"/>
    <property type="project" value="Ensembl"/>
</dbReference>
<dbReference type="GO" id="GO:0005615">
    <property type="term" value="C:extracellular space"/>
    <property type="evidence" value="ECO:0007669"/>
    <property type="project" value="UniProtKB-KW"/>
</dbReference>
<dbReference type="GO" id="GO:0005654">
    <property type="term" value="C:nucleoplasm"/>
    <property type="evidence" value="ECO:0007669"/>
    <property type="project" value="Ensembl"/>
</dbReference>
<dbReference type="GO" id="GO:0005886">
    <property type="term" value="C:plasma membrane"/>
    <property type="evidence" value="ECO:0007669"/>
    <property type="project" value="Ensembl"/>
</dbReference>
<dbReference type="GO" id="GO:0042056">
    <property type="term" value="F:chemoattractant activity"/>
    <property type="evidence" value="ECO:0007669"/>
    <property type="project" value="Ensembl"/>
</dbReference>
<dbReference type="GO" id="GO:0005125">
    <property type="term" value="F:cytokine activity"/>
    <property type="evidence" value="ECO:0007669"/>
    <property type="project" value="UniProtKB-KW"/>
</dbReference>
<dbReference type="GO" id="GO:0005126">
    <property type="term" value="F:cytokine receptor binding"/>
    <property type="evidence" value="ECO:0007669"/>
    <property type="project" value="Ensembl"/>
</dbReference>
<dbReference type="GO" id="GO:0004167">
    <property type="term" value="F:dopachrome isomerase activity"/>
    <property type="evidence" value="ECO:0000250"/>
    <property type="project" value="UniProtKB"/>
</dbReference>
<dbReference type="GO" id="GO:0042802">
    <property type="term" value="F:identical protein binding"/>
    <property type="evidence" value="ECO:0007669"/>
    <property type="project" value="Ensembl"/>
</dbReference>
<dbReference type="GO" id="GO:0050178">
    <property type="term" value="F:phenylpyruvate tautomerase activity"/>
    <property type="evidence" value="ECO:0007669"/>
    <property type="project" value="UniProtKB-EC"/>
</dbReference>
<dbReference type="GO" id="GO:0002020">
    <property type="term" value="F:protease binding"/>
    <property type="evidence" value="ECO:0007669"/>
    <property type="project" value="Ensembl"/>
</dbReference>
<dbReference type="GO" id="GO:0007166">
    <property type="term" value="P:cell surface receptor signaling pathway"/>
    <property type="evidence" value="ECO:0007669"/>
    <property type="project" value="Ensembl"/>
</dbReference>
<dbReference type="GO" id="GO:0090398">
    <property type="term" value="P:cellular senescence"/>
    <property type="evidence" value="ECO:0007669"/>
    <property type="project" value="Ensembl"/>
</dbReference>
<dbReference type="GO" id="GO:0030330">
    <property type="term" value="P:DNA damage response, signal transduction by p53 class mediator"/>
    <property type="evidence" value="ECO:0007669"/>
    <property type="project" value="Ensembl"/>
</dbReference>
<dbReference type="GO" id="GO:0006954">
    <property type="term" value="P:inflammatory response"/>
    <property type="evidence" value="ECO:0007669"/>
    <property type="project" value="UniProtKB-KW"/>
</dbReference>
<dbReference type="GO" id="GO:0045087">
    <property type="term" value="P:innate immune response"/>
    <property type="evidence" value="ECO:0007669"/>
    <property type="project" value="UniProtKB-KW"/>
</dbReference>
<dbReference type="GO" id="GO:2000773">
    <property type="term" value="P:negative regulation of cellular senescence"/>
    <property type="evidence" value="ECO:0007669"/>
    <property type="project" value="Ensembl"/>
</dbReference>
<dbReference type="GO" id="GO:0043518">
    <property type="term" value="P:negative regulation of DNA damage response, signal transduction by p53 class mediator"/>
    <property type="evidence" value="ECO:0007669"/>
    <property type="project" value="Ensembl"/>
</dbReference>
<dbReference type="GO" id="GO:0010629">
    <property type="term" value="P:negative regulation of gene expression"/>
    <property type="evidence" value="ECO:0007669"/>
    <property type="project" value="Ensembl"/>
</dbReference>
<dbReference type="GO" id="GO:1902166">
    <property type="term" value="P:negative regulation of intrinsic apoptotic signaling pathway in response to DNA damage by p53 class mediator"/>
    <property type="evidence" value="ECO:0007669"/>
    <property type="project" value="Ensembl"/>
</dbReference>
<dbReference type="GO" id="GO:0010760">
    <property type="term" value="P:negative regulation of macrophage chemotaxis"/>
    <property type="evidence" value="ECO:0007669"/>
    <property type="project" value="Ensembl"/>
</dbReference>
<dbReference type="GO" id="GO:0002906">
    <property type="term" value="P:negative regulation of mature B cell apoptotic process"/>
    <property type="evidence" value="ECO:0007669"/>
    <property type="project" value="Ensembl"/>
</dbReference>
<dbReference type="GO" id="GO:0033033">
    <property type="term" value="P:negative regulation of myeloid cell apoptotic process"/>
    <property type="evidence" value="ECO:0007669"/>
    <property type="project" value="Ensembl"/>
</dbReference>
<dbReference type="GO" id="GO:0051248">
    <property type="term" value="P:negative regulation of protein metabolic process"/>
    <property type="evidence" value="ECO:0007669"/>
    <property type="project" value="Ensembl"/>
</dbReference>
<dbReference type="GO" id="GO:0090238">
    <property type="term" value="P:positive regulation of arachidonate secretion"/>
    <property type="evidence" value="ECO:0007669"/>
    <property type="project" value="Ensembl"/>
</dbReference>
<dbReference type="GO" id="GO:0030890">
    <property type="term" value="P:positive regulation of B cell proliferation"/>
    <property type="evidence" value="ECO:0007669"/>
    <property type="project" value="Ensembl"/>
</dbReference>
<dbReference type="GO" id="GO:0141163">
    <property type="term" value="P:positive regulation of cAMP/PKA signal transduction"/>
    <property type="evidence" value="ECO:0007669"/>
    <property type="project" value="Ensembl"/>
</dbReference>
<dbReference type="GO" id="GO:2000343">
    <property type="term" value="P:positive regulation of chemokine (C-X-C motif) ligand 2 production"/>
    <property type="evidence" value="ECO:0007669"/>
    <property type="project" value="Ensembl"/>
</dbReference>
<dbReference type="GO" id="GO:0070374">
    <property type="term" value="P:positive regulation of ERK1 and ERK2 cascade"/>
    <property type="evidence" value="ECO:0007669"/>
    <property type="project" value="Ensembl"/>
</dbReference>
<dbReference type="GO" id="GO:0048146">
    <property type="term" value="P:positive regulation of fibroblast proliferation"/>
    <property type="evidence" value="ECO:0007669"/>
    <property type="project" value="Ensembl"/>
</dbReference>
<dbReference type="GO" id="GO:0031666">
    <property type="term" value="P:positive regulation of lipopolysaccharide-mediated signaling pathway"/>
    <property type="evidence" value="ECO:0007669"/>
    <property type="project" value="Ensembl"/>
</dbReference>
<dbReference type="GO" id="GO:0061081">
    <property type="term" value="P:positive regulation of myeloid leukocyte cytokine production involved in immune response"/>
    <property type="evidence" value="ECO:0007669"/>
    <property type="project" value="Ensembl"/>
</dbReference>
<dbReference type="GO" id="GO:0042327">
    <property type="term" value="P:positive regulation of phosphorylation"/>
    <property type="evidence" value="ECO:0007669"/>
    <property type="project" value="Ensembl"/>
</dbReference>
<dbReference type="GO" id="GO:0061078">
    <property type="term" value="P:positive regulation of prostaglandin secretion involved in immune response"/>
    <property type="evidence" value="ECO:0007669"/>
    <property type="project" value="Ensembl"/>
</dbReference>
<dbReference type="GO" id="GO:0032760">
    <property type="term" value="P:positive regulation of tumor necrosis factor production"/>
    <property type="evidence" value="ECO:0007669"/>
    <property type="project" value="Ensembl"/>
</dbReference>
<dbReference type="GO" id="GO:0001516">
    <property type="term" value="P:prostaglandin biosynthetic process"/>
    <property type="evidence" value="ECO:0007669"/>
    <property type="project" value="Ensembl"/>
</dbReference>
<dbReference type="GO" id="GO:0070207">
    <property type="term" value="P:protein homotrimerization"/>
    <property type="evidence" value="ECO:0007669"/>
    <property type="project" value="Ensembl"/>
</dbReference>
<dbReference type="FunFam" id="3.30.429.10:FF:000001">
    <property type="entry name" value="Macrophage migration inhibitory factor"/>
    <property type="match status" value="1"/>
</dbReference>
<dbReference type="Gene3D" id="3.30.429.10">
    <property type="entry name" value="Macrophage Migration Inhibitory Factor"/>
    <property type="match status" value="1"/>
</dbReference>
<dbReference type="InterPro" id="IPR001398">
    <property type="entry name" value="Macrophage_inhib_fac"/>
</dbReference>
<dbReference type="InterPro" id="IPR019829">
    <property type="entry name" value="Macrophage_inhib_fac_CS"/>
</dbReference>
<dbReference type="InterPro" id="IPR014347">
    <property type="entry name" value="Tautomerase/MIF_sf"/>
</dbReference>
<dbReference type="PANTHER" id="PTHR11954">
    <property type="entry name" value="D-DOPACHROME DECARBOXYLASE"/>
    <property type="match status" value="1"/>
</dbReference>
<dbReference type="PANTHER" id="PTHR11954:SF6">
    <property type="entry name" value="MACROPHAGE MIGRATION INHIBITORY FACTOR"/>
    <property type="match status" value="1"/>
</dbReference>
<dbReference type="Pfam" id="PF01187">
    <property type="entry name" value="MIF"/>
    <property type="match status" value="1"/>
</dbReference>
<dbReference type="SUPFAM" id="SSF55331">
    <property type="entry name" value="Tautomerase/MIF"/>
    <property type="match status" value="1"/>
</dbReference>
<dbReference type="PROSITE" id="PS01158">
    <property type="entry name" value="MIF"/>
    <property type="match status" value="1"/>
</dbReference>
<proteinExistence type="inferred from homology"/>
<accession>Q4R549</accession>
<keyword id="KW-0007">Acetylation</keyword>
<keyword id="KW-0202">Cytokine</keyword>
<keyword id="KW-0963">Cytoplasm</keyword>
<keyword id="KW-0391">Immunity</keyword>
<keyword id="KW-0395">Inflammatory response</keyword>
<keyword id="KW-0399">Innate immunity</keyword>
<keyword id="KW-0413">Isomerase</keyword>
<keyword id="KW-1185">Reference proteome</keyword>
<keyword id="KW-0964">Secreted</keyword>
<reference key="1">
    <citation type="submission" date="2005-06" db="EMBL/GenBank/DDBJ databases">
        <title>DNA sequences of macaque genes expressed in brain or testis and its evolutionary implications.</title>
        <authorList>
            <consortium name="International consortium for macaque cDNA sequencing and analysis"/>
        </authorList>
    </citation>
    <scope>NUCLEOTIDE SEQUENCE [LARGE SCALE MRNA]</scope>
    <source>
        <tissue>Brain cortex</tissue>
    </source>
</reference>
<evidence type="ECO:0000250" key="1">
    <source>
        <dbReference type="UniProtKB" id="P14174"/>
    </source>
</evidence>
<evidence type="ECO:0000250" key="2">
    <source>
        <dbReference type="UniProtKB" id="P34884"/>
    </source>
</evidence>
<evidence type="ECO:0000305" key="3"/>
<gene>
    <name type="primary">MIF</name>
    <name type="ORF">QccE-19130</name>
</gene>
<protein>
    <recommendedName>
        <fullName>Macrophage migration inhibitory factor</fullName>
        <shortName>MIF</shortName>
        <ecNumber evidence="1">5.3.2.1</ecNumber>
    </recommendedName>
    <alternativeName>
        <fullName>L-dopachrome isomerase</fullName>
    </alternativeName>
    <alternativeName>
        <fullName>L-dopachrome tautomerase</fullName>
        <ecNumber evidence="1">5.3.3.12</ecNumber>
    </alternativeName>
    <alternativeName>
        <fullName>Phenylpyruvate tautomerase</fullName>
    </alternativeName>
</protein>
<name>MIF_MACFA</name>
<feature type="initiator methionine" description="Removed" evidence="1">
    <location>
        <position position="1"/>
    </location>
</feature>
<feature type="chain" id="PRO_0000158063" description="Macrophage migration inhibitory factor">
    <location>
        <begin position="2"/>
        <end position="115"/>
    </location>
</feature>
<feature type="active site" description="Proton acceptor; via imino nitrogen" evidence="2">
    <location>
        <position position="2"/>
    </location>
</feature>
<feature type="binding site" evidence="1">
    <location>
        <position position="33"/>
    </location>
    <ligand>
        <name>substrate</name>
    </ligand>
</feature>
<feature type="binding site" evidence="1">
    <location>
        <position position="65"/>
    </location>
    <ligand>
        <name>substrate</name>
    </ligand>
</feature>
<feature type="binding site" evidence="1">
    <location>
        <position position="98"/>
    </location>
    <ligand>
        <name>substrate</name>
    </ligand>
</feature>
<feature type="modified residue" description="N6-acetyllysine; alternate" evidence="1">
    <location>
        <position position="78"/>
    </location>
</feature>
<feature type="modified residue" description="N6-succinyllysine; alternate" evidence="2">
    <location>
        <position position="78"/>
    </location>
</feature>
<sequence>MPMFIVNTNVPRASVPDGFLSELTQQLAQATGKPPQYIAVHVVPDQLMAFGGSSEPCALCSLHSIGKIGGAQNRSYSKLLCGLLAERLRISPDRVYINYYDMNAANVGWNNSTFA</sequence>
<comment type="function">
    <text evidence="1">Pro-inflammatory cytokine involved in the innate immune response to bacterial pathogens. The expression of MIF at sites of inflammation suggests a role as mediator in regulating the function of macrophages in host defense. Counteracts the anti-inflammatory activity of glucocorticoids. Has phenylpyruvate tautomerase and dopachrome tautomerase activity (in vitro), but the physiological substrate is not known. It is not clear whether the tautomerase activity has any physiological relevance, and whether it is important for cytokine activity.</text>
</comment>
<comment type="catalytic activity">
    <reaction evidence="1">
        <text>3-phenylpyruvate = enol-phenylpyruvate</text>
        <dbReference type="Rhea" id="RHEA:17097"/>
        <dbReference type="ChEBI" id="CHEBI:16815"/>
        <dbReference type="ChEBI" id="CHEBI:18005"/>
        <dbReference type="EC" id="5.3.2.1"/>
    </reaction>
</comment>
<comment type="catalytic activity">
    <reaction evidence="1">
        <text>L-dopachrome = 5,6-dihydroxyindole-2-carboxylate</text>
        <dbReference type="Rhea" id="RHEA:13041"/>
        <dbReference type="ChEBI" id="CHEBI:16875"/>
        <dbReference type="ChEBI" id="CHEBI:57509"/>
        <dbReference type="EC" id="5.3.3.12"/>
    </reaction>
</comment>
<comment type="subunit">
    <text evidence="1 2">Homotrimer (By similarity). Interacts with CXCR2 extracellular domain (By similarity). Interacts with the CD74 extracellular domain, USO1, COPS5 and BNIPL (By similarity).</text>
</comment>
<comment type="subcellular location">
    <subcellularLocation>
        <location evidence="1">Secreted</location>
    </subcellularLocation>
    <subcellularLocation>
        <location evidence="1">Cytoplasm</location>
    </subcellularLocation>
    <text evidence="1">Does not have a cleavable signal sequence and is secreted via a specialized, non-classical pathway. Secreted by macrophages upon stimulation by bacterial lipopolysaccharide (LPS), or by M.tuberculosis antigens.</text>
</comment>
<comment type="similarity">
    <text evidence="3">Belongs to the MIF family.</text>
</comment>